<name>PGTB2_DICDI</name>
<keyword id="KW-0479">Metal-binding</keyword>
<keyword id="KW-0637">Prenyltransferase</keyword>
<keyword id="KW-1185">Reference proteome</keyword>
<keyword id="KW-0677">Repeat</keyword>
<keyword id="KW-0808">Transferase</keyword>
<keyword id="KW-0862">Zinc</keyword>
<gene>
    <name type="primary">rabggtb</name>
    <name type="ORF">DDB_G0290671</name>
</gene>
<reference key="1">
    <citation type="journal article" date="2005" name="Nature">
        <title>The genome of the social amoeba Dictyostelium discoideum.</title>
        <authorList>
            <person name="Eichinger L."/>
            <person name="Pachebat J.A."/>
            <person name="Gloeckner G."/>
            <person name="Rajandream M.A."/>
            <person name="Sucgang R."/>
            <person name="Berriman M."/>
            <person name="Song J."/>
            <person name="Olsen R."/>
            <person name="Szafranski K."/>
            <person name="Xu Q."/>
            <person name="Tunggal B."/>
            <person name="Kummerfeld S."/>
            <person name="Madera M."/>
            <person name="Konfortov B.A."/>
            <person name="Rivero F."/>
            <person name="Bankier A.T."/>
            <person name="Lehmann R."/>
            <person name="Hamlin N."/>
            <person name="Davies R."/>
            <person name="Gaudet P."/>
            <person name="Fey P."/>
            <person name="Pilcher K."/>
            <person name="Chen G."/>
            <person name="Saunders D."/>
            <person name="Sodergren E.J."/>
            <person name="Davis P."/>
            <person name="Kerhornou A."/>
            <person name="Nie X."/>
            <person name="Hall N."/>
            <person name="Anjard C."/>
            <person name="Hemphill L."/>
            <person name="Bason N."/>
            <person name="Farbrother P."/>
            <person name="Desany B."/>
            <person name="Just E."/>
            <person name="Morio T."/>
            <person name="Rost R."/>
            <person name="Churcher C.M."/>
            <person name="Cooper J."/>
            <person name="Haydock S."/>
            <person name="van Driessche N."/>
            <person name="Cronin A."/>
            <person name="Goodhead I."/>
            <person name="Muzny D.M."/>
            <person name="Mourier T."/>
            <person name="Pain A."/>
            <person name="Lu M."/>
            <person name="Harper D."/>
            <person name="Lindsay R."/>
            <person name="Hauser H."/>
            <person name="James K.D."/>
            <person name="Quiles M."/>
            <person name="Madan Babu M."/>
            <person name="Saito T."/>
            <person name="Buchrieser C."/>
            <person name="Wardroper A."/>
            <person name="Felder M."/>
            <person name="Thangavelu M."/>
            <person name="Johnson D."/>
            <person name="Knights A."/>
            <person name="Loulseged H."/>
            <person name="Mungall K.L."/>
            <person name="Oliver K."/>
            <person name="Price C."/>
            <person name="Quail M.A."/>
            <person name="Urushihara H."/>
            <person name="Hernandez J."/>
            <person name="Rabbinowitsch E."/>
            <person name="Steffen D."/>
            <person name="Sanders M."/>
            <person name="Ma J."/>
            <person name="Kohara Y."/>
            <person name="Sharp S."/>
            <person name="Simmonds M.N."/>
            <person name="Spiegler S."/>
            <person name="Tivey A."/>
            <person name="Sugano S."/>
            <person name="White B."/>
            <person name="Walker D."/>
            <person name="Woodward J.R."/>
            <person name="Winckler T."/>
            <person name="Tanaka Y."/>
            <person name="Shaulsky G."/>
            <person name="Schleicher M."/>
            <person name="Weinstock G.M."/>
            <person name="Rosenthal A."/>
            <person name="Cox E.C."/>
            <person name="Chisholm R.L."/>
            <person name="Gibbs R.A."/>
            <person name="Loomis W.F."/>
            <person name="Platzer M."/>
            <person name="Kay R.R."/>
            <person name="Williams J.G."/>
            <person name="Dear P.H."/>
            <person name="Noegel A.A."/>
            <person name="Barrell B.G."/>
            <person name="Kuspa A."/>
        </authorList>
    </citation>
    <scope>NUCLEOTIDE SEQUENCE [LARGE SCALE GENOMIC DNA]</scope>
    <source>
        <strain>AX4</strain>
    </source>
</reference>
<organism>
    <name type="scientific">Dictyostelium discoideum</name>
    <name type="common">Social amoeba</name>
    <dbReference type="NCBI Taxonomy" id="44689"/>
    <lineage>
        <taxon>Eukaryota</taxon>
        <taxon>Amoebozoa</taxon>
        <taxon>Evosea</taxon>
        <taxon>Eumycetozoa</taxon>
        <taxon>Dictyostelia</taxon>
        <taxon>Dictyosteliales</taxon>
        <taxon>Dictyosteliaceae</taxon>
        <taxon>Dictyostelium</taxon>
    </lineage>
</organism>
<sequence>MTDNINKESTTTTTTIDHTTNLLIDKHVEYIVKLGSKKDSFEYWVTEHIRMNGMYWGLSSLYLLKSLDKLDKNEVIQWLLSCQKSNGGFGGNTSHDDHLLSTLSAVQILIQYDALDKIDINSVVDYVVKLQREDGSFVGDQWGEVDTRFSYAAIMCLSLLKSLDKINCEKAVEYILSCQNFDGGFGSIPGAESHAGQIFTCVGALSILNEINKIDIDKLGWWLSERQLPNGGLNGRPEKSSDVCYSWWVLSALSAIDRLHWIDNDKLKSYILKCQDNETGGIADKPGDIPDVFHTFFGICGLSLMGYFKDQIESIDPVYALGTKTLQKLGLNLPWNKNL</sequence>
<proteinExistence type="inferred from homology"/>
<dbReference type="EC" id="2.5.1.60"/>
<dbReference type="EMBL" id="AAFI02000164">
    <property type="protein sequence ID" value="EDR41036.1"/>
    <property type="molecule type" value="Genomic_DNA"/>
</dbReference>
<dbReference type="RefSeq" id="XP_001733035.1">
    <property type="nucleotide sequence ID" value="XM_001732983.1"/>
</dbReference>
<dbReference type="SMR" id="B0G172"/>
<dbReference type="FunCoup" id="B0G172">
    <property type="interactions" value="61"/>
</dbReference>
<dbReference type="STRING" id="44689.B0G172"/>
<dbReference type="PaxDb" id="44689-DDB0233949"/>
<dbReference type="EnsemblProtists" id="EDR41036">
    <property type="protein sequence ID" value="EDR41036"/>
    <property type="gene ID" value="DDB_G0290671"/>
</dbReference>
<dbReference type="GeneID" id="8627741"/>
<dbReference type="KEGG" id="ddi:DDB_G0290671"/>
<dbReference type="dictyBase" id="DDB_G0290671">
    <property type="gene designation" value="rabggtb"/>
</dbReference>
<dbReference type="VEuPathDB" id="AmoebaDB:DDB_G0290671"/>
<dbReference type="eggNOG" id="KOG0366">
    <property type="taxonomic scope" value="Eukaryota"/>
</dbReference>
<dbReference type="HOGENOM" id="CLU_028946_3_0_1"/>
<dbReference type="InParanoid" id="B0G172"/>
<dbReference type="OMA" id="VKRCQCP"/>
<dbReference type="PhylomeDB" id="B0G172"/>
<dbReference type="Reactome" id="R-DDI-6803205">
    <property type="pathway name" value="TP53 regulates transcription of several additional cell death genes whose specific roles in p53-dependent apoptosis remain uncertain"/>
</dbReference>
<dbReference type="Reactome" id="R-DDI-8873719">
    <property type="pathway name" value="RAB geranylgeranylation"/>
</dbReference>
<dbReference type="PRO" id="PR:B0G172"/>
<dbReference type="Proteomes" id="UP000002195">
    <property type="component" value="Chromosome 5"/>
</dbReference>
<dbReference type="GO" id="GO:0005968">
    <property type="term" value="C:Rab-protein geranylgeranyltransferase complex"/>
    <property type="evidence" value="ECO:0000250"/>
    <property type="project" value="UniProtKB"/>
</dbReference>
<dbReference type="GO" id="GO:0004663">
    <property type="term" value="F:Rab geranylgeranyltransferase activity"/>
    <property type="evidence" value="ECO:0000250"/>
    <property type="project" value="UniProtKB"/>
</dbReference>
<dbReference type="GO" id="GO:0031267">
    <property type="term" value="F:small GTPase binding"/>
    <property type="evidence" value="ECO:0000250"/>
    <property type="project" value="UniProtKB"/>
</dbReference>
<dbReference type="GO" id="GO:0008270">
    <property type="term" value="F:zinc ion binding"/>
    <property type="evidence" value="ECO:0000250"/>
    <property type="project" value="UniProtKB"/>
</dbReference>
<dbReference type="GO" id="GO:0006888">
    <property type="term" value="P:endoplasmic reticulum to Golgi vesicle-mediated transport"/>
    <property type="evidence" value="ECO:0000318"/>
    <property type="project" value="GO_Central"/>
</dbReference>
<dbReference type="GO" id="GO:0018344">
    <property type="term" value="P:protein geranylgeranylation"/>
    <property type="evidence" value="ECO:0000250"/>
    <property type="project" value="UniProtKB"/>
</dbReference>
<dbReference type="CDD" id="cd02894">
    <property type="entry name" value="GGTase-II"/>
    <property type="match status" value="1"/>
</dbReference>
<dbReference type="FunFam" id="1.50.10.20:FF:000009">
    <property type="entry name" value="Geranylgeranyl transferase type-2 subunit beta"/>
    <property type="match status" value="1"/>
</dbReference>
<dbReference type="Gene3D" id="1.50.10.20">
    <property type="match status" value="1"/>
</dbReference>
<dbReference type="InterPro" id="IPR045089">
    <property type="entry name" value="PGGT1B-like"/>
</dbReference>
<dbReference type="InterPro" id="IPR001330">
    <property type="entry name" value="Prenyltrans"/>
</dbReference>
<dbReference type="InterPro" id="IPR026873">
    <property type="entry name" value="Ptb1"/>
</dbReference>
<dbReference type="InterPro" id="IPR008930">
    <property type="entry name" value="Terpenoid_cyclase/PrenylTrfase"/>
</dbReference>
<dbReference type="PANTHER" id="PTHR11774">
    <property type="entry name" value="GERANYLGERANYL TRANSFERASE TYPE BETA SUBUNIT"/>
    <property type="match status" value="1"/>
</dbReference>
<dbReference type="PANTHER" id="PTHR11774:SF11">
    <property type="entry name" value="GERANYLGERANYL TRANSFERASE TYPE-2 SUBUNIT BETA"/>
    <property type="match status" value="1"/>
</dbReference>
<dbReference type="Pfam" id="PF00432">
    <property type="entry name" value="Prenyltrans"/>
    <property type="match status" value="1"/>
</dbReference>
<dbReference type="SUPFAM" id="SSF48239">
    <property type="entry name" value="Terpenoid cyclases/Protein prenyltransferases"/>
    <property type="match status" value="1"/>
</dbReference>
<protein>
    <recommendedName>
        <fullName>Probable geranylgeranyl transferase type-2 subunit beta</fullName>
        <ecNumber>2.5.1.60</ecNumber>
    </recommendedName>
    <alternativeName>
        <fullName>Geranylgeranyl transferase type II subunit beta</fullName>
        <shortName>GGTase-II-beta</shortName>
    </alternativeName>
    <alternativeName>
        <fullName>Rab geranyl-geranyltransferase subunit beta</fullName>
        <shortName>Rab GG transferase beta</shortName>
        <shortName>Rab GGTase beta</shortName>
    </alternativeName>
    <alternativeName>
        <fullName>Rab geranylgeranyltransferase subunit beta</fullName>
    </alternativeName>
    <alternativeName>
        <fullName>Type II protein geranyl-geranyltransferase subunit beta</fullName>
    </alternativeName>
</protein>
<evidence type="ECO:0000250" key="1"/>
<evidence type="ECO:0000305" key="2"/>
<accession>B0G172</accession>
<comment type="function">
    <text evidence="1">Catalyzes the transfer of a geranyl-geranyl moiety from geranyl-geranyl pyrophosphate to both cysteines in Rab proteins with an -XXCC, -XCXC and -CCXX C-terminal.</text>
</comment>
<comment type="catalytic activity">
    <reaction>
        <text>geranylgeranyl diphosphate + L-cysteinyl-[protein] = S-geranylgeranyl-L-cysteinyl-[protein] + diphosphate</text>
        <dbReference type="Rhea" id="RHEA:21240"/>
        <dbReference type="Rhea" id="RHEA-COMP:10131"/>
        <dbReference type="Rhea" id="RHEA-COMP:11537"/>
        <dbReference type="ChEBI" id="CHEBI:29950"/>
        <dbReference type="ChEBI" id="CHEBI:33019"/>
        <dbReference type="ChEBI" id="CHEBI:57533"/>
        <dbReference type="ChEBI" id="CHEBI:86021"/>
        <dbReference type="EC" id="2.5.1.60"/>
    </reaction>
</comment>
<comment type="cofactor">
    <cofactor evidence="1">
        <name>Zn(2+)</name>
        <dbReference type="ChEBI" id="CHEBI:29105"/>
    </cofactor>
    <text evidence="1">Binds 1 zinc ion per subunit.</text>
</comment>
<comment type="subunit">
    <text evidence="1">Heterodimer of an alpha and a beta subunit.</text>
</comment>
<comment type="similarity">
    <text evidence="2">Belongs to the protein prenyltransferase subunit beta family.</text>
</comment>
<feature type="chain" id="PRO_0000331291" description="Probable geranylgeranyl transferase type-2 subunit beta">
    <location>
        <begin position="1"/>
        <end position="339"/>
    </location>
</feature>
<feature type="repeat" description="PFTB 1">
    <location>
        <begin position="24"/>
        <end position="65"/>
    </location>
</feature>
<feature type="repeat" description="PFTB 2">
    <location>
        <begin position="72"/>
        <end position="113"/>
    </location>
</feature>
<feature type="repeat" description="PFTB 3">
    <location>
        <begin position="120"/>
        <end position="161"/>
    </location>
</feature>
<feature type="repeat" description="PFTB 4">
    <location>
        <begin position="168"/>
        <end position="209"/>
    </location>
</feature>
<feature type="repeat" description="PFTB 5">
    <location>
        <begin position="216"/>
        <end position="257"/>
    </location>
</feature>
<feature type="repeat" description="PFTB 6">
    <location>
        <begin position="264"/>
        <end position="306"/>
    </location>
</feature>
<feature type="binding site" evidence="1">
    <location>
        <begin position="194"/>
        <end position="196"/>
    </location>
    <ligand>
        <name>geranylgeranyl diphosphate</name>
        <dbReference type="ChEBI" id="CHEBI:57533"/>
    </ligand>
</feature>
<feature type="binding site" evidence="1">
    <location>
        <begin position="236"/>
        <end position="248"/>
    </location>
    <ligand>
        <name>geranylgeranyl diphosphate</name>
        <dbReference type="ChEBI" id="CHEBI:57533"/>
    </ligand>
</feature>
<feature type="binding site" evidence="1">
    <location>
        <position position="242"/>
    </location>
    <ligand>
        <name>Zn(2+)</name>
        <dbReference type="ChEBI" id="CHEBI:29105"/>
        <note>catalytic</note>
    </ligand>
</feature>
<feature type="binding site" evidence="1">
    <location>
        <position position="244"/>
    </location>
    <ligand>
        <name>Zn(2+)</name>
        <dbReference type="ChEBI" id="CHEBI:29105"/>
        <note>catalytic</note>
    </ligand>
</feature>
<feature type="binding site" evidence="1">
    <location>
        <position position="294"/>
    </location>
    <ligand>
        <name>Zn(2+)</name>
        <dbReference type="ChEBI" id="CHEBI:29105"/>
        <note>catalytic</note>
    </ligand>
</feature>